<dbReference type="EC" id="6.1.1.3" evidence="1"/>
<dbReference type="EMBL" id="CP000099">
    <property type="protein sequence ID" value="AAZ71840.1"/>
    <property type="molecule type" value="Genomic_DNA"/>
</dbReference>
<dbReference type="SMR" id="Q467V2"/>
<dbReference type="STRING" id="269797.Mbar_A2945"/>
<dbReference type="PaxDb" id="269797-Mbar_A2945"/>
<dbReference type="KEGG" id="mba:Mbar_A2945"/>
<dbReference type="eggNOG" id="arCOG00401">
    <property type="taxonomic scope" value="Archaea"/>
</dbReference>
<dbReference type="HOGENOM" id="CLU_029833_0_0_2"/>
<dbReference type="OrthoDB" id="372136at2157"/>
<dbReference type="GO" id="GO:0005737">
    <property type="term" value="C:cytoplasm"/>
    <property type="evidence" value="ECO:0007669"/>
    <property type="project" value="UniProtKB-SubCell"/>
</dbReference>
<dbReference type="GO" id="GO:0005524">
    <property type="term" value="F:ATP binding"/>
    <property type="evidence" value="ECO:0007669"/>
    <property type="project" value="UniProtKB-UniRule"/>
</dbReference>
<dbReference type="GO" id="GO:0004829">
    <property type="term" value="F:threonine-tRNA ligase activity"/>
    <property type="evidence" value="ECO:0007669"/>
    <property type="project" value="UniProtKB-UniRule"/>
</dbReference>
<dbReference type="GO" id="GO:0000049">
    <property type="term" value="F:tRNA binding"/>
    <property type="evidence" value="ECO:0007669"/>
    <property type="project" value="UniProtKB-KW"/>
</dbReference>
<dbReference type="GO" id="GO:0008270">
    <property type="term" value="F:zinc ion binding"/>
    <property type="evidence" value="ECO:0007669"/>
    <property type="project" value="InterPro"/>
</dbReference>
<dbReference type="GO" id="GO:0006435">
    <property type="term" value="P:threonyl-tRNA aminoacylation"/>
    <property type="evidence" value="ECO:0007669"/>
    <property type="project" value="UniProtKB-UniRule"/>
</dbReference>
<dbReference type="CDD" id="cd00860">
    <property type="entry name" value="ThrRS_anticodon"/>
    <property type="match status" value="1"/>
</dbReference>
<dbReference type="FunFam" id="3.30.930.10:FF:000076">
    <property type="entry name" value="Threonine--tRNA ligase"/>
    <property type="match status" value="1"/>
</dbReference>
<dbReference type="FunFam" id="3.40.50.800:FF:000001">
    <property type="entry name" value="Threonine--tRNA ligase"/>
    <property type="match status" value="1"/>
</dbReference>
<dbReference type="FunFam" id="3.50.80.10:FF:000004">
    <property type="entry name" value="Threonine--tRNA ligase"/>
    <property type="match status" value="1"/>
</dbReference>
<dbReference type="Gene3D" id="3.40.50.800">
    <property type="entry name" value="Anticodon-binding domain"/>
    <property type="match status" value="1"/>
</dbReference>
<dbReference type="Gene3D" id="3.30.930.10">
    <property type="entry name" value="Bira Bifunctional Protein, Domain 2"/>
    <property type="match status" value="1"/>
</dbReference>
<dbReference type="Gene3D" id="3.50.80.10">
    <property type="entry name" value="D-tyrosyl-tRNA(Tyr) deacylase"/>
    <property type="match status" value="1"/>
</dbReference>
<dbReference type="HAMAP" id="MF_00184">
    <property type="entry name" value="Thr_tRNA_synth"/>
    <property type="match status" value="1"/>
</dbReference>
<dbReference type="InterPro" id="IPR002314">
    <property type="entry name" value="aa-tRNA-synt_IIb"/>
</dbReference>
<dbReference type="InterPro" id="IPR006195">
    <property type="entry name" value="aa-tRNA-synth_II"/>
</dbReference>
<dbReference type="InterPro" id="IPR045864">
    <property type="entry name" value="aa-tRNA-synth_II/BPL/LPL"/>
</dbReference>
<dbReference type="InterPro" id="IPR004154">
    <property type="entry name" value="Anticodon-bd"/>
</dbReference>
<dbReference type="InterPro" id="IPR036621">
    <property type="entry name" value="Anticodon-bd_dom_sf"/>
</dbReference>
<dbReference type="InterPro" id="IPR023509">
    <property type="entry name" value="DTD-like_sf"/>
</dbReference>
<dbReference type="InterPro" id="IPR002320">
    <property type="entry name" value="Thr-tRNA-ligase_IIa"/>
</dbReference>
<dbReference type="InterPro" id="IPR015011">
    <property type="entry name" value="Threonyl-tRNA_syn_edit_dom_arc"/>
</dbReference>
<dbReference type="InterPro" id="IPR047246">
    <property type="entry name" value="ThrRS_anticodon"/>
</dbReference>
<dbReference type="NCBIfam" id="NF003068">
    <property type="entry name" value="PRK03991.1"/>
    <property type="match status" value="1"/>
</dbReference>
<dbReference type="NCBIfam" id="TIGR00418">
    <property type="entry name" value="thrS"/>
    <property type="match status" value="1"/>
</dbReference>
<dbReference type="PANTHER" id="PTHR11451:SF44">
    <property type="entry name" value="THREONINE--TRNA LIGASE, CHLOROPLASTIC_MITOCHONDRIAL 2"/>
    <property type="match status" value="1"/>
</dbReference>
<dbReference type="PANTHER" id="PTHR11451">
    <property type="entry name" value="THREONINE-TRNA LIGASE"/>
    <property type="match status" value="1"/>
</dbReference>
<dbReference type="Pfam" id="PF03129">
    <property type="entry name" value="HGTP_anticodon"/>
    <property type="match status" value="1"/>
</dbReference>
<dbReference type="Pfam" id="PF00587">
    <property type="entry name" value="tRNA-synt_2b"/>
    <property type="match status" value="1"/>
</dbReference>
<dbReference type="Pfam" id="PF08915">
    <property type="entry name" value="tRNA-Thr_ED"/>
    <property type="match status" value="1"/>
</dbReference>
<dbReference type="PRINTS" id="PR01047">
    <property type="entry name" value="TRNASYNTHTHR"/>
</dbReference>
<dbReference type="SUPFAM" id="SSF52954">
    <property type="entry name" value="Class II aaRS ABD-related"/>
    <property type="match status" value="1"/>
</dbReference>
<dbReference type="SUPFAM" id="SSF55681">
    <property type="entry name" value="Class II aaRS and biotin synthetases"/>
    <property type="match status" value="1"/>
</dbReference>
<dbReference type="PROSITE" id="PS50862">
    <property type="entry name" value="AA_TRNA_LIGASE_II"/>
    <property type="match status" value="1"/>
</dbReference>
<gene>
    <name evidence="1" type="primary">thrS</name>
    <name type="ordered locus">Mbar_A2945</name>
</gene>
<proteinExistence type="inferred from homology"/>
<accession>Q467V2</accession>
<feature type="chain" id="PRO_1000020426" description="Threonine--tRNA ligase">
    <location>
        <begin position="1"/>
        <end position="635"/>
    </location>
</feature>
<feature type="region of interest" description="Editing domain" evidence="1">
    <location>
        <begin position="1"/>
        <end position="144"/>
    </location>
</feature>
<feature type="region of interest" description="Catalytic" evidence="1">
    <location>
        <begin position="215"/>
        <end position="514"/>
    </location>
</feature>
<feature type="binding site" evidence="1">
    <location>
        <position position="307"/>
    </location>
    <ligand>
        <name>Zn(2+)</name>
        <dbReference type="ChEBI" id="CHEBI:29105"/>
    </ligand>
</feature>
<feature type="binding site" evidence="1">
    <location>
        <position position="359"/>
    </location>
    <ligand>
        <name>Zn(2+)</name>
        <dbReference type="ChEBI" id="CHEBI:29105"/>
    </ligand>
</feature>
<feature type="binding site" evidence="1">
    <location>
        <position position="483"/>
    </location>
    <ligand>
        <name>Zn(2+)</name>
        <dbReference type="ChEBI" id="CHEBI:29105"/>
    </ligand>
</feature>
<comment type="function">
    <text evidence="1">Catalyzes the attachment of threonine to tRNA(Thr) in a two-step reaction: L-threonine is first activated by ATP to form Thr-AMP and then transferred to the acceptor end of tRNA(Thr). Also edits incorrectly charged L-seryl-tRNA(Thr).</text>
</comment>
<comment type="catalytic activity">
    <reaction evidence="1">
        <text>tRNA(Thr) + L-threonine + ATP = L-threonyl-tRNA(Thr) + AMP + diphosphate + H(+)</text>
        <dbReference type="Rhea" id="RHEA:24624"/>
        <dbReference type="Rhea" id="RHEA-COMP:9670"/>
        <dbReference type="Rhea" id="RHEA-COMP:9704"/>
        <dbReference type="ChEBI" id="CHEBI:15378"/>
        <dbReference type="ChEBI" id="CHEBI:30616"/>
        <dbReference type="ChEBI" id="CHEBI:33019"/>
        <dbReference type="ChEBI" id="CHEBI:57926"/>
        <dbReference type="ChEBI" id="CHEBI:78442"/>
        <dbReference type="ChEBI" id="CHEBI:78534"/>
        <dbReference type="ChEBI" id="CHEBI:456215"/>
        <dbReference type="EC" id="6.1.1.3"/>
    </reaction>
</comment>
<comment type="cofactor">
    <cofactor evidence="1">
        <name>Zn(2+)</name>
        <dbReference type="ChEBI" id="CHEBI:29105"/>
    </cofactor>
    <text evidence="1">Binds 1 zinc ion per subunit.</text>
</comment>
<comment type="subunit">
    <text evidence="1">Homodimer.</text>
</comment>
<comment type="subcellular location">
    <subcellularLocation>
        <location evidence="1">Cytoplasm</location>
    </subcellularLocation>
</comment>
<comment type="domain">
    <text evidence="1">The N-terminal domain is an archaea-specific tRNA-editing domain that hydrolyzes incorrectly charged L-seryl-tRNA(Thr). Catalysis of tRNA editing is performed by the charged tRNA itself.</text>
</comment>
<comment type="similarity">
    <text evidence="1">Belongs to the class-II aminoacyl-tRNA synthetase family.</text>
</comment>
<sequence>MQLLLIHSDYIEYETKKQTPVAEKIEESLKSCRLEEALTAFMAVESVDEANPEETIEKTVFEIEKVATQVKTDRIMLYPYAHLSSDLSSPKVAVKVFKGIETALSGKYEVKRAPFGWYKAFSISCKGHPLSELSRSIRPEGTQRAAGKVEAGKEKEEVVSEALKAEDTAKSYWRILTPDGELREIENFDLTPYPKLQQFVDYEISKSRAVERAPPHVELMRRLELADYEPGSDSGNMRYYPKGRLIKALLENYVLDVATDFGAMEVETPIMYDMNHPTLKKYLDRFPARQYSIESDKRQMFLRFAACFGQFLMNHDMTISYRNLPLRMIEMTRYSFRKEQRGELVGLRRLRAFTMPDMHSLCEDMDQAVDQFKKQYDLCIDVLENIGIHIKDYEVAIRFTKDFYESNKELIVNMARTVNKPVLVEMWDTRFFYFVLKFEFNFVDALAKASALSTVQIDVENAERYDISYVNADGKLERPTVLHCSPSGAIERCIYALLEKAAMETEEGKVPMLPVWLSPTQVRIVPISEKHVAFAEEVSQKLDCRVDIDDRDLSIGKKVREAGREWVPYVVVIGDKEIEDGTINVTIRAESEQKKPKKVQITPEELNDRIKGEIAGKPYRKLPLSKHLSGRPKFV</sequence>
<protein>
    <recommendedName>
        <fullName evidence="1">Threonine--tRNA ligase</fullName>
        <ecNumber evidence="1">6.1.1.3</ecNumber>
    </recommendedName>
    <alternativeName>
        <fullName evidence="1">Threonyl-tRNA synthetase</fullName>
        <shortName evidence="1">ThrRS</shortName>
    </alternativeName>
</protein>
<name>SYT_METBF</name>
<organism>
    <name type="scientific">Methanosarcina barkeri (strain Fusaro / DSM 804)</name>
    <dbReference type="NCBI Taxonomy" id="269797"/>
    <lineage>
        <taxon>Archaea</taxon>
        <taxon>Methanobacteriati</taxon>
        <taxon>Methanobacteriota</taxon>
        <taxon>Stenosarchaea group</taxon>
        <taxon>Methanomicrobia</taxon>
        <taxon>Methanosarcinales</taxon>
        <taxon>Methanosarcinaceae</taxon>
        <taxon>Methanosarcina</taxon>
    </lineage>
</organism>
<evidence type="ECO:0000255" key="1">
    <source>
        <dbReference type="HAMAP-Rule" id="MF_00184"/>
    </source>
</evidence>
<reference key="1">
    <citation type="journal article" date="2006" name="J. Bacteriol.">
        <title>The Methanosarcina barkeri genome: comparative analysis with Methanosarcina acetivorans and Methanosarcina mazei reveals extensive rearrangement within methanosarcinal genomes.</title>
        <authorList>
            <person name="Maeder D.L."/>
            <person name="Anderson I."/>
            <person name="Brettin T.S."/>
            <person name="Bruce D.C."/>
            <person name="Gilna P."/>
            <person name="Han C.S."/>
            <person name="Lapidus A."/>
            <person name="Metcalf W.W."/>
            <person name="Saunders E."/>
            <person name="Tapia R."/>
            <person name="Sowers K.R."/>
        </authorList>
    </citation>
    <scope>NUCLEOTIDE SEQUENCE [LARGE SCALE GENOMIC DNA]</scope>
    <source>
        <strain>Fusaro / DSM 804</strain>
    </source>
</reference>
<keyword id="KW-0030">Aminoacyl-tRNA synthetase</keyword>
<keyword id="KW-0067">ATP-binding</keyword>
<keyword id="KW-0963">Cytoplasm</keyword>
<keyword id="KW-0436">Ligase</keyword>
<keyword id="KW-0479">Metal-binding</keyword>
<keyword id="KW-0547">Nucleotide-binding</keyword>
<keyword id="KW-0648">Protein biosynthesis</keyword>
<keyword id="KW-0694">RNA-binding</keyword>
<keyword id="KW-0820">tRNA-binding</keyword>
<keyword id="KW-0862">Zinc</keyword>